<name>US9_HHV11</name>
<evidence type="ECO:0000250" key="1"/>
<evidence type="ECO:0000255" key="2"/>
<evidence type="ECO:0000269" key="3">
    <source>
    </source>
</evidence>
<evidence type="ECO:0000269" key="4">
    <source>
    </source>
</evidence>
<evidence type="ECO:0000305" key="5"/>
<keyword id="KW-1032">Host cell membrane</keyword>
<keyword id="KW-1038">Host endoplasmic reticulum</keyword>
<keyword id="KW-1040">Host Golgi apparatus</keyword>
<keyword id="KW-1043">Host membrane</keyword>
<keyword id="KW-0472">Membrane</keyword>
<keyword id="KW-0597">Phosphoprotein</keyword>
<keyword id="KW-1185">Reference proteome</keyword>
<keyword id="KW-0735">Signal-anchor</keyword>
<keyword id="KW-0812">Transmembrane</keyword>
<keyword id="KW-1133">Transmembrane helix</keyword>
<keyword id="KW-0261">Viral envelope protein</keyword>
<keyword id="KW-0946">Virion</keyword>
<dbReference type="EMBL" id="L00036">
    <property type="protein sequence ID" value="AAA96679.1"/>
    <property type="molecule type" value="Genomic_DNA"/>
</dbReference>
<dbReference type="EMBL" id="X14112">
    <property type="protein sequence ID" value="CAA32274.1"/>
    <property type="molecule type" value="Genomic_DNA"/>
</dbReference>
<dbReference type="EMBL" id="X02138">
    <property type="protein sequence ID" value="CAA26063.1"/>
    <property type="molecule type" value="Genomic_DNA"/>
</dbReference>
<dbReference type="EMBL" id="DQ889502">
    <property type="protein sequence ID" value="ABI63528.1"/>
    <property type="molecule type" value="Genomic_DNA"/>
</dbReference>
<dbReference type="EMBL" id="FJ593289">
    <property type="protein sequence ID" value="ACM62299.1"/>
    <property type="molecule type" value="Genomic_DNA"/>
</dbReference>
<dbReference type="PIR" id="A05241">
    <property type="entry name" value="QQBE79"/>
</dbReference>
<dbReference type="RefSeq" id="YP_009137145.1">
    <property type="nucleotide sequence ID" value="NC_001806.2"/>
</dbReference>
<dbReference type="SMR" id="P06481"/>
<dbReference type="DNASU" id="2703452"/>
<dbReference type="GeneID" id="2703452"/>
<dbReference type="KEGG" id="vg:2703452"/>
<dbReference type="Proteomes" id="UP000009294">
    <property type="component" value="Segment"/>
</dbReference>
<dbReference type="Proteomes" id="UP000180652">
    <property type="component" value="Segment"/>
</dbReference>
<dbReference type="GO" id="GO:0043657">
    <property type="term" value="C:host cell"/>
    <property type="evidence" value="ECO:0007669"/>
    <property type="project" value="GOC"/>
</dbReference>
<dbReference type="GO" id="GO:0044178">
    <property type="term" value="C:host cell Golgi membrane"/>
    <property type="evidence" value="ECO:0007669"/>
    <property type="project" value="UniProtKB-SubCell"/>
</dbReference>
<dbReference type="GO" id="GO:0020002">
    <property type="term" value="C:host cell plasma membrane"/>
    <property type="evidence" value="ECO:0007669"/>
    <property type="project" value="UniProtKB-SubCell"/>
</dbReference>
<dbReference type="GO" id="GO:0044171">
    <property type="term" value="C:host cell smooth endoplasmic reticulum membrane"/>
    <property type="evidence" value="ECO:0007669"/>
    <property type="project" value="UniProtKB-SubCell"/>
</dbReference>
<dbReference type="GO" id="GO:0016020">
    <property type="term" value="C:membrane"/>
    <property type="evidence" value="ECO:0007669"/>
    <property type="project" value="UniProtKB-KW"/>
</dbReference>
<dbReference type="GO" id="GO:0019031">
    <property type="term" value="C:viral envelope"/>
    <property type="evidence" value="ECO:0007669"/>
    <property type="project" value="UniProtKB-KW"/>
</dbReference>
<dbReference type="GO" id="GO:0055036">
    <property type="term" value="C:virion membrane"/>
    <property type="evidence" value="ECO:0007669"/>
    <property type="project" value="UniProtKB-SubCell"/>
</dbReference>
<dbReference type="GO" id="GO:0075733">
    <property type="term" value="P:intracellular transport of virus"/>
    <property type="evidence" value="ECO:0000315"/>
    <property type="project" value="CACAO"/>
</dbReference>
<dbReference type="InterPro" id="IPR009278">
    <property type="entry name" value="Herpes_US9"/>
</dbReference>
<dbReference type="Pfam" id="PF06072">
    <property type="entry name" value="Herpes_US9"/>
    <property type="match status" value="1"/>
</dbReference>
<gene>
    <name type="ORF">US9</name>
</gene>
<sequence length="90" mass="10027">MTSRLSDPNSSARSDMSVPLYPTASPVSVEAYYSESEDEAANDFLVRMGRQQSVLRRRRRRTRCVGMVIACLLVAVLSGGFGALLMWLLR</sequence>
<proteinExistence type="evidence at protein level"/>
<organismHost>
    <name type="scientific">Homo sapiens</name>
    <name type="common">Human</name>
    <dbReference type="NCBI Taxonomy" id="9606"/>
</organismHost>
<comment type="function">
    <text evidence="3 4">Essential for the anterograde spread of the infection throughout the host nervous system. Together with the gE/gI heterodimer, US9 is involved in the sorting and transport of viral structural components toward axon tips.</text>
</comment>
<comment type="subcellular location">
    <subcellularLocation>
        <location>Virion membrane</location>
        <topology>Single-pass type II membrane protein</topology>
    </subcellularLocation>
    <subcellularLocation>
        <location>Host Golgi apparatus membrane</location>
        <topology>Single-pass type II membrane protein</topology>
    </subcellularLocation>
    <subcellularLocation>
        <location evidence="5">Host smooth endoplasmic reticulum membrane</location>
        <topology evidence="5">Single-pass type II membrane protein</topology>
    </subcellularLocation>
    <subcellularLocation>
        <location evidence="5">Host cell membrane</location>
        <topology evidence="5">Single-pass type II membrane protein</topology>
    </subcellularLocation>
    <text evidence="5">During virion morphogenesis, this protein probably accumulates in the endosomes and trans-Golgi where secondary envelopment occurs. It is probably transported to the cell surface from where it is endocytosed and directed to the trans-Golgi network (TGN), maybe through an interaction with PACS-1 sorting protein (Potential).</text>
</comment>
<comment type="PTM">
    <text evidence="5">Phosphorylated on serines within the acidic cluster, possibly by host CK2. Phosphorylation determines whether endocytosed viral US9 traffics to the trans-Golgi network or recycles to the cell membrane.</text>
</comment>
<comment type="similarity">
    <text evidence="5">Belongs to the alphaherpesvirinae envelope protein US9 family.</text>
</comment>
<accession>P06481</accession>
<accession>B9VQK4</accession>
<accession>Q09I67</accession>
<protein>
    <recommendedName>
        <fullName>Envelope protein US9</fullName>
    </recommendedName>
    <alternativeName>
        <fullName>10 kDa protein</fullName>
    </alternativeName>
</protein>
<organism>
    <name type="scientific">Human herpesvirus 1 (strain 17)</name>
    <name type="common">HHV-1</name>
    <name type="synonym">Human herpes simplex virus 1</name>
    <dbReference type="NCBI Taxonomy" id="10299"/>
    <lineage>
        <taxon>Viruses</taxon>
        <taxon>Duplodnaviria</taxon>
        <taxon>Heunggongvirae</taxon>
        <taxon>Peploviricota</taxon>
        <taxon>Herviviricetes</taxon>
        <taxon>Herpesvirales</taxon>
        <taxon>Orthoherpesviridae</taxon>
        <taxon>Alphaherpesvirinae</taxon>
        <taxon>Simplexvirus</taxon>
        <taxon>Simplexvirus humanalpha1</taxon>
        <taxon>Human herpesvirus 1</taxon>
    </lineage>
</organism>
<feature type="chain" id="PRO_0000116132" description="Envelope protein US9">
    <location>
        <begin position="1"/>
        <end position="90"/>
    </location>
</feature>
<feature type="topological domain" description="Intravirion" evidence="1">
    <location>
        <begin position="1"/>
        <end position="67"/>
    </location>
</feature>
<feature type="transmembrane region" description="Helical; Signal-anchor for type II membrane protein" evidence="1">
    <location>
        <begin position="68"/>
        <end position="88"/>
    </location>
</feature>
<feature type="topological domain" description="Virion surface" evidence="1">
    <location>
        <begin position="89"/>
        <end position="90"/>
    </location>
</feature>
<feature type="region of interest" description="Acidic">
    <location>
        <begin position="30"/>
        <end position="39"/>
    </location>
</feature>
<feature type="short sequence motif" description="Internalization motif" evidence="2">
    <location>
        <begin position="21"/>
        <end position="24"/>
    </location>
</feature>
<feature type="modified residue" description="Phosphoserine; by host CK2" evidence="2">
    <location>
        <position position="34"/>
    </location>
</feature>
<feature type="modified residue" description="Phosphoserine; by host CK2" evidence="2">
    <location>
        <position position="36"/>
    </location>
</feature>
<feature type="sequence variant" description="In strain: Nonneuroinvasive mutant HF10.">
    <original>V</original>
    <variation>A</variation>
    <location>
        <position position="29"/>
    </location>
</feature>
<reference key="1">
    <citation type="journal article" date="1985" name="J. Mol. Biol.">
        <title>Sequence determination and genetic content of the short unique region in the genome of herpes simplex virus type 1.</title>
        <authorList>
            <person name="McGeoch D.J."/>
            <person name="Dolan A."/>
            <person name="Donald S."/>
            <person name="Rixon F.J."/>
        </authorList>
    </citation>
    <scope>NUCLEOTIDE SEQUENCE [GENOMIC DNA]</scope>
</reference>
<reference key="2">
    <citation type="journal article" date="1988" name="J. Gen. Virol.">
        <title>The complete DNA sequence of the long unique region in the genome of herpes simplex virus type 1.</title>
        <authorList>
            <person name="McGeoch D.J."/>
            <person name="Dalrymple M.A."/>
            <person name="Davison A.J."/>
            <person name="Dolan A."/>
            <person name="Frame M.C."/>
            <person name="McNab D."/>
            <person name="Perry L.J."/>
            <person name="Scott J.E."/>
            <person name="Taylor P."/>
        </authorList>
    </citation>
    <scope>NUCLEOTIDE SEQUENCE [LARGE SCALE GENOMIC DNA]</scope>
</reference>
<reference key="3">
    <citation type="journal article" date="2007" name="Microbes Infect.">
        <title>Determination and analysis of the DNA sequence of highly attenuated herpes simplex virus type 1 mutant HF10, a potential oncolytic virus.</title>
        <authorList>
            <person name="Ushijima Y."/>
            <person name="Luo C."/>
            <person name="Goshima F."/>
            <person name="Yamauchi Y."/>
            <person name="Kimura H."/>
            <person name="Nishiyama Y."/>
        </authorList>
    </citation>
    <scope>NUCLEOTIDE SEQUENCE [LARGE SCALE GENOMIC DNA]</scope>
    <source>
        <strain>Nonneuroinvasive mutant HF10</strain>
    </source>
</reference>
<reference key="4">
    <citation type="submission" date="2008-12" db="EMBL/GenBank/DDBJ databases">
        <title>Herpes simplex virus type 1 bacterial artificial chromosome.</title>
        <authorList>
            <person name="Cunningham C."/>
            <person name="Davison A.J."/>
        </authorList>
    </citation>
    <scope>NUCLEOTIDE SEQUENCE [LARGE SCALE GENOMIC DNA]</scope>
    <source>
        <strain>17 syn+</strain>
    </source>
</reference>
<reference key="5">
    <citation type="journal article" date="2007" name="Neuroscience">
        <title>Viral regulation of the long distance axonal transport of herpes simplex virus nucleocapsid.</title>
        <authorList>
            <person name="LaVail J.H."/>
            <person name="Tauscher A.N."/>
            <person name="Sucher A."/>
            <person name="Harrabi O."/>
            <person name="Brandimarti R."/>
        </authorList>
    </citation>
    <scope>FUNCTION</scope>
    <scope>SUBCELLULAR LOCATION</scope>
    <source>
        <strain>F</strain>
    </source>
</reference>
<reference key="6">
    <citation type="journal article" date="2008" name="J. Virol.">
        <title>Herpes simplex virus gE/gI and US9 proteins promote transport of both capsids and virion glycoproteins in neuronal axons.</title>
        <authorList>
            <person name="Snyder A."/>
            <person name="Polcicova K."/>
            <person name="Johnson D.C."/>
        </authorList>
    </citation>
    <scope>FUNCTION</scope>
    <source>
        <strain>F</strain>
    </source>
</reference>
<reference key="7">
    <citation type="journal article" date="2008" name="J. Virol.">
        <title>Comprehensive characterization of extracellular herpes simplex virus type 1 virions.</title>
        <authorList>
            <person name="Loret S."/>
            <person name="Guay G."/>
            <person name="Lippe R."/>
        </authorList>
    </citation>
    <scope>SUBCELLULAR LOCATION</scope>
    <source>
        <strain>F</strain>
    </source>
</reference>
<reference key="8">
    <citation type="journal article" date="2009" name="J. Virol.">
        <title>Comparison of the pseudorabies virus Us9 protein with homologs from other veterinary and human alphaherpesviruses.</title>
        <authorList>
            <person name="Lyman M.G."/>
            <person name="Kemp C.D."/>
            <person name="Taylor M.P."/>
            <person name="Enquist L.W."/>
        </authorList>
    </citation>
    <scope>TOPOLOGY</scope>
    <scope>SUBCELLULAR LOCATION</scope>
</reference>